<protein>
    <recommendedName>
        <fullName>Homeobox protein Hox-A13</fullName>
    </recommendedName>
</protein>
<name>HXA13_AMBME</name>
<gene>
    <name type="primary">HOXA13</name>
</gene>
<evidence type="ECO:0000250" key="1"/>
<evidence type="ECO:0000255" key="2">
    <source>
        <dbReference type="PROSITE-ProRule" id="PRU00108"/>
    </source>
</evidence>
<evidence type="ECO:0000305" key="3"/>
<organism>
    <name type="scientific">Ambystoma mexicanum</name>
    <name type="common">Axolotl</name>
    <dbReference type="NCBI Taxonomy" id="8296"/>
    <lineage>
        <taxon>Eukaryota</taxon>
        <taxon>Metazoa</taxon>
        <taxon>Chordata</taxon>
        <taxon>Craniata</taxon>
        <taxon>Vertebrata</taxon>
        <taxon>Euteleostomi</taxon>
        <taxon>Amphibia</taxon>
        <taxon>Batrachia</taxon>
        <taxon>Caudata</taxon>
        <taxon>Salamandroidea</taxon>
        <taxon>Ambystomatidae</taxon>
        <taxon>Ambystoma</taxon>
    </lineage>
</organism>
<proteinExistence type="evidence at transcript level"/>
<sequence length="107" mass="12746">TNGWNGQVYCSKEQGQPPHLWKSSLPDVVWHPSDANSYRRGRKKRVPYTKVQLKELEREYATNKFITKDKRRRISATTNLSERQVTIWFQNRRVKEKKVINKLKTTS</sequence>
<accession>P50210</accession>
<reference key="1">
    <citation type="journal article" date="1995" name="Development">
        <title>Regulation of HoxA expression in developing and regenerating axolotl limbs.</title>
        <authorList>
            <person name="Gardiner D.M."/>
            <person name="Blumberg B."/>
            <person name="Komine Y."/>
            <person name="Bryant S.V."/>
        </authorList>
    </citation>
    <scope>NUCLEOTIDE SEQUENCE [MRNA]</scope>
    <source>
        <tissue>Regenerating limb blastema</tissue>
    </source>
</reference>
<comment type="function">
    <text evidence="1">Sequence-specific transcription factor which is part of a developmental regulatory system that provides cells with specific positional identities on the anterior-posterior axis.</text>
</comment>
<comment type="subcellular location">
    <subcellularLocation>
        <location>Nucleus</location>
    </subcellularLocation>
</comment>
<comment type="similarity">
    <text evidence="3">Belongs to the Abd-B homeobox family.</text>
</comment>
<feature type="chain" id="PRO_0000200106" description="Homeobox protein Hox-A13">
    <location>
        <begin position="1" status="less than"/>
        <end position="107"/>
    </location>
</feature>
<feature type="DNA-binding region" description="Homeobox" evidence="2">
    <location>
        <begin position="41"/>
        <end position="100"/>
    </location>
</feature>
<feature type="non-terminal residue">
    <location>
        <position position="1"/>
    </location>
</feature>
<dbReference type="EMBL" id="U20942">
    <property type="protein sequence ID" value="AAA86506.1"/>
    <property type="molecule type" value="mRNA"/>
</dbReference>
<dbReference type="BMRB" id="P50210"/>
<dbReference type="SMR" id="P50210"/>
<dbReference type="GO" id="GO:0005634">
    <property type="term" value="C:nucleus"/>
    <property type="evidence" value="ECO:0007669"/>
    <property type="project" value="UniProtKB-SubCell"/>
</dbReference>
<dbReference type="GO" id="GO:0003677">
    <property type="term" value="F:DNA binding"/>
    <property type="evidence" value="ECO:0007669"/>
    <property type="project" value="UniProtKB-KW"/>
</dbReference>
<dbReference type="GO" id="GO:0000981">
    <property type="term" value="F:DNA-binding transcription factor activity, RNA polymerase II-specific"/>
    <property type="evidence" value="ECO:0007669"/>
    <property type="project" value="InterPro"/>
</dbReference>
<dbReference type="CDD" id="cd00086">
    <property type="entry name" value="homeodomain"/>
    <property type="match status" value="1"/>
</dbReference>
<dbReference type="FunFam" id="1.10.10.60:FF:000130">
    <property type="entry name" value="Homeobox protein Hox-D12"/>
    <property type="match status" value="1"/>
</dbReference>
<dbReference type="Gene3D" id="1.10.10.60">
    <property type="entry name" value="Homeodomain-like"/>
    <property type="match status" value="1"/>
</dbReference>
<dbReference type="InterPro" id="IPR051003">
    <property type="entry name" value="AP_axis_regulatory_Homeobox"/>
</dbReference>
<dbReference type="InterPro" id="IPR001356">
    <property type="entry name" value="HD"/>
</dbReference>
<dbReference type="InterPro" id="IPR020479">
    <property type="entry name" value="HD_metazoa"/>
</dbReference>
<dbReference type="InterPro" id="IPR017970">
    <property type="entry name" value="Homeobox_CS"/>
</dbReference>
<dbReference type="InterPro" id="IPR009057">
    <property type="entry name" value="Homeodomain-like_sf"/>
</dbReference>
<dbReference type="PANTHER" id="PTHR45804:SF3">
    <property type="entry name" value="HOMEOBOX PROTEIN HOX-A13"/>
    <property type="match status" value="1"/>
</dbReference>
<dbReference type="PANTHER" id="PTHR45804">
    <property type="entry name" value="SEGMENTATION PROTEIN FUSHI TARAZU-LIKE PROTEIN"/>
    <property type="match status" value="1"/>
</dbReference>
<dbReference type="Pfam" id="PF00046">
    <property type="entry name" value="Homeodomain"/>
    <property type="match status" value="1"/>
</dbReference>
<dbReference type="PRINTS" id="PR00024">
    <property type="entry name" value="HOMEOBOX"/>
</dbReference>
<dbReference type="SMART" id="SM00389">
    <property type="entry name" value="HOX"/>
    <property type="match status" value="1"/>
</dbReference>
<dbReference type="SUPFAM" id="SSF46689">
    <property type="entry name" value="Homeodomain-like"/>
    <property type="match status" value="1"/>
</dbReference>
<dbReference type="PROSITE" id="PS00027">
    <property type="entry name" value="HOMEOBOX_1"/>
    <property type="match status" value="1"/>
</dbReference>
<dbReference type="PROSITE" id="PS50071">
    <property type="entry name" value="HOMEOBOX_2"/>
    <property type="match status" value="1"/>
</dbReference>
<keyword id="KW-0217">Developmental protein</keyword>
<keyword id="KW-0238">DNA-binding</keyword>
<keyword id="KW-0371">Homeobox</keyword>
<keyword id="KW-0539">Nucleus</keyword>
<keyword id="KW-0804">Transcription</keyword>
<keyword id="KW-0805">Transcription regulation</keyword>